<comment type="function">
    <text evidence="1">RuBisCO catalyzes two reactions: the carboxylation of D-ribulose 1,5-bisphosphate, the primary event in carbon dioxide fixation, as well as the oxidative fragmentation of the pentose substrate in the photorespiration process. Both reactions occur simultaneously and in competition at the same active site.</text>
</comment>
<comment type="catalytic activity">
    <reaction evidence="1">
        <text>2 (2R)-3-phosphoglycerate + 2 H(+) = D-ribulose 1,5-bisphosphate + CO2 + H2O</text>
        <dbReference type="Rhea" id="RHEA:23124"/>
        <dbReference type="ChEBI" id="CHEBI:15377"/>
        <dbReference type="ChEBI" id="CHEBI:15378"/>
        <dbReference type="ChEBI" id="CHEBI:16526"/>
        <dbReference type="ChEBI" id="CHEBI:57870"/>
        <dbReference type="ChEBI" id="CHEBI:58272"/>
        <dbReference type="EC" id="4.1.1.39"/>
    </reaction>
</comment>
<comment type="catalytic activity">
    <reaction evidence="1">
        <text>D-ribulose 1,5-bisphosphate + O2 = 2-phosphoglycolate + (2R)-3-phosphoglycerate + 2 H(+)</text>
        <dbReference type="Rhea" id="RHEA:36631"/>
        <dbReference type="ChEBI" id="CHEBI:15378"/>
        <dbReference type="ChEBI" id="CHEBI:15379"/>
        <dbReference type="ChEBI" id="CHEBI:57870"/>
        <dbReference type="ChEBI" id="CHEBI:58033"/>
        <dbReference type="ChEBI" id="CHEBI:58272"/>
    </reaction>
</comment>
<comment type="cofactor">
    <cofactor evidence="1">
        <name>Mg(2+)</name>
        <dbReference type="ChEBI" id="CHEBI:18420"/>
    </cofactor>
    <text evidence="1">Binds 1 Mg(2+) ion per subunit.</text>
</comment>
<comment type="subunit">
    <text evidence="1">Heterohexadecamer of 8 large chains and 8 small chains; disulfide-linked. The disulfide link is formed within the large subunit homodimers.</text>
</comment>
<comment type="subcellular location">
    <subcellularLocation>
        <location>Plastid</location>
        <location>Chloroplast</location>
    </subcellularLocation>
</comment>
<comment type="PTM">
    <text evidence="1">The disulfide bond which can form in the large chain dimeric partners within the hexadecamer appears to be associated with oxidative stress and protein turnover.</text>
</comment>
<comment type="miscellaneous">
    <text evidence="1">The basic functional RuBisCO is composed of a large chain homodimer in a 'head-to-tail' conformation. In form I RuBisCO this homodimer is arranged in a barrel-like tetramer with the small subunits forming a tetrameric 'cap' on each end of the 'barrel'.</text>
</comment>
<comment type="similarity">
    <text evidence="1">Belongs to the RuBisCO large chain family. Type I subfamily.</text>
</comment>
<comment type="sequence caution" evidence="2">
    <conflict type="erroneous initiation">
        <sequence resource="EMBL-CDS" id="AAB81444"/>
    </conflict>
</comment>
<accession>O19872</accession>
<reference key="1">
    <citation type="journal article" date="1998" name="Am. J. Bot.">
        <title>Circumscription of the Malvales and relationships to other rosidae: evidence from rbcL data.</title>
        <authorList>
            <person name="Alverson W.S."/>
            <person name="Karol K.G."/>
            <person name="Baum D.A."/>
            <person name="Chase M.W."/>
            <person name="Swensen S.M."/>
            <person name="McCourt R."/>
            <person name="Sytsma K.J."/>
        </authorList>
    </citation>
    <scope>NUCLEOTIDE SEQUENCE [GENOMIC DNA]</scope>
</reference>
<reference key="2">
    <citation type="journal article" date="1998" name="Taxon">
        <title>Plastid rbcL sequence data indicate a close affinity between Diegodendron and Bixa.</title>
        <authorList>
            <person name="Fay M.F."/>
            <person name="Bayer C."/>
            <person name="Alverson W.S."/>
            <person name="de Bruijn A.Y."/>
            <person name="Chase M.W."/>
        </authorList>
    </citation>
    <scope>NUCLEOTIDE SEQUENCE [GENOMIC DNA] OF 10-466</scope>
</reference>
<proteinExistence type="inferred from homology"/>
<evidence type="ECO:0000255" key="1">
    <source>
        <dbReference type="HAMAP-Rule" id="MF_01338"/>
    </source>
</evidence>
<evidence type="ECO:0000305" key="2"/>
<geneLocation type="chloroplast"/>
<sequence length="466" mass="51780">FVGFKAGVKEYKLTYYTPDYETKDTDILAAFRVTPQPGVPPEEAGAAVAAESSTGTWTAVWTDGLTSLDRYKGRCYHIEPVAGEENQYICYVAYPLDLFEEGSVTNMFTSIVGNVFGFKALRALRLEDLRIPPAYSKTFQGPPHGIQVERDKLNKYGRPLLGCTIKPKLGLSAKNYGRACYECLRGGLDFTKDDENVNSQPFMRWRDRFLFCAEAIYKAQAETGEIKGHYLNATAGTCEEMMKRAVFARELGVPIVMHDYLTGGFTANTSLAHYCRDNGLLLHIHRAMHAVIDRQKNHGMHFRVLAKALRLSGGDHIHAGTVVGKLEGERDITLGFVDLLRDDFIEKDRSRGIYFTQDWVSLPGVIPVASGGIHVWHMPALTEIFGDDSVLQFGGGTLGHPWGNAPGAVANRVALEACVQARNEGRDLAREGNEIIREASKWSPELAAACEVWKEIKFEFEAMDTL</sequence>
<feature type="chain" id="PRO_0000062377" description="Ribulose bisphosphate carboxylase large chain">
    <location>
        <begin position="1" status="less than"/>
        <end position="466"/>
    </location>
</feature>
<feature type="active site" description="Proton acceptor" evidence="1">
    <location>
        <position position="166"/>
    </location>
</feature>
<feature type="active site" description="Proton acceptor" evidence="1">
    <location>
        <position position="285"/>
    </location>
</feature>
<feature type="binding site" description="in homodimeric partner" evidence="1">
    <location>
        <position position="114"/>
    </location>
    <ligand>
        <name>substrate</name>
    </ligand>
</feature>
<feature type="binding site" evidence="1">
    <location>
        <position position="164"/>
    </location>
    <ligand>
        <name>substrate</name>
    </ligand>
</feature>
<feature type="binding site" evidence="1">
    <location>
        <position position="168"/>
    </location>
    <ligand>
        <name>substrate</name>
    </ligand>
</feature>
<feature type="binding site" description="via carbamate group" evidence="1">
    <location>
        <position position="192"/>
    </location>
    <ligand>
        <name>Mg(2+)</name>
        <dbReference type="ChEBI" id="CHEBI:18420"/>
    </ligand>
</feature>
<feature type="binding site" evidence="1">
    <location>
        <position position="194"/>
    </location>
    <ligand>
        <name>Mg(2+)</name>
        <dbReference type="ChEBI" id="CHEBI:18420"/>
    </ligand>
</feature>
<feature type="binding site" evidence="1">
    <location>
        <position position="195"/>
    </location>
    <ligand>
        <name>Mg(2+)</name>
        <dbReference type="ChEBI" id="CHEBI:18420"/>
    </ligand>
</feature>
<feature type="binding site" evidence="1">
    <location>
        <position position="286"/>
    </location>
    <ligand>
        <name>substrate</name>
    </ligand>
</feature>
<feature type="binding site" evidence="1">
    <location>
        <position position="318"/>
    </location>
    <ligand>
        <name>substrate</name>
    </ligand>
</feature>
<feature type="binding site" evidence="1">
    <location>
        <position position="370"/>
    </location>
    <ligand>
        <name>substrate</name>
    </ligand>
</feature>
<feature type="site" description="Transition state stabilizer" evidence="1">
    <location>
        <position position="325"/>
    </location>
</feature>
<feature type="modified residue" description="N6,N6,N6-trimethyllysine" evidence="1">
    <location>
        <position position="5"/>
    </location>
</feature>
<feature type="modified residue" description="N6-carboxylysine" evidence="1">
    <location>
        <position position="192"/>
    </location>
</feature>
<feature type="disulfide bond" description="Interchain; in linked form" evidence="1">
    <location>
        <position position="238"/>
    </location>
</feature>
<feature type="non-terminal residue">
    <location>
        <position position="1"/>
    </location>
</feature>
<organism>
    <name type="scientific">Bixa orellana</name>
    <name type="common">Lipstick tree</name>
    <dbReference type="NCBI Taxonomy" id="66672"/>
    <lineage>
        <taxon>Eukaryota</taxon>
        <taxon>Viridiplantae</taxon>
        <taxon>Streptophyta</taxon>
        <taxon>Embryophyta</taxon>
        <taxon>Tracheophyta</taxon>
        <taxon>Spermatophyta</taxon>
        <taxon>Magnoliopsida</taxon>
        <taxon>eudicotyledons</taxon>
        <taxon>Gunneridae</taxon>
        <taxon>Pentapetalae</taxon>
        <taxon>rosids</taxon>
        <taxon>malvids</taxon>
        <taxon>Malvales</taxon>
        <taxon>Bixaceae</taxon>
        <taxon>Bixa</taxon>
    </lineage>
</organism>
<gene>
    <name evidence="1" type="primary">rbcL</name>
</gene>
<keyword id="KW-0113">Calvin cycle</keyword>
<keyword id="KW-0120">Carbon dioxide fixation</keyword>
<keyword id="KW-0150">Chloroplast</keyword>
<keyword id="KW-1015">Disulfide bond</keyword>
<keyword id="KW-0456">Lyase</keyword>
<keyword id="KW-0460">Magnesium</keyword>
<keyword id="KW-0479">Metal-binding</keyword>
<keyword id="KW-0488">Methylation</keyword>
<keyword id="KW-0503">Monooxygenase</keyword>
<keyword id="KW-0560">Oxidoreductase</keyword>
<keyword id="KW-0601">Photorespiration</keyword>
<keyword id="KW-0602">Photosynthesis</keyword>
<keyword id="KW-0934">Plastid</keyword>
<dbReference type="EC" id="4.1.1.39" evidence="1"/>
<dbReference type="EMBL" id="AF022128">
    <property type="protein sequence ID" value="AAB81444.1"/>
    <property type="status" value="ALT_INIT"/>
    <property type="molecule type" value="Genomic_DNA"/>
</dbReference>
<dbReference type="EMBL" id="Y15139">
    <property type="protein sequence ID" value="CAA75407.1"/>
    <property type="molecule type" value="Genomic_DNA"/>
</dbReference>
<dbReference type="SMR" id="O19872"/>
<dbReference type="GO" id="GO:0009507">
    <property type="term" value="C:chloroplast"/>
    <property type="evidence" value="ECO:0007669"/>
    <property type="project" value="UniProtKB-SubCell"/>
</dbReference>
<dbReference type="GO" id="GO:0000287">
    <property type="term" value="F:magnesium ion binding"/>
    <property type="evidence" value="ECO:0007669"/>
    <property type="project" value="InterPro"/>
</dbReference>
<dbReference type="GO" id="GO:0004497">
    <property type="term" value="F:monooxygenase activity"/>
    <property type="evidence" value="ECO:0007669"/>
    <property type="project" value="UniProtKB-KW"/>
</dbReference>
<dbReference type="GO" id="GO:0016984">
    <property type="term" value="F:ribulose-bisphosphate carboxylase activity"/>
    <property type="evidence" value="ECO:0007669"/>
    <property type="project" value="UniProtKB-EC"/>
</dbReference>
<dbReference type="GO" id="GO:0009853">
    <property type="term" value="P:photorespiration"/>
    <property type="evidence" value="ECO:0007669"/>
    <property type="project" value="UniProtKB-KW"/>
</dbReference>
<dbReference type="GO" id="GO:0019253">
    <property type="term" value="P:reductive pentose-phosphate cycle"/>
    <property type="evidence" value="ECO:0007669"/>
    <property type="project" value="UniProtKB-KW"/>
</dbReference>
<dbReference type="CDD" id="cd08212">
    <property type="entry name" value="RuBisCO_large_I"/>
    <property type="match status" value="1"/>
</dbReference>
<dbReference type="FunFam" id="3.20.20.110:FF:000001">
    <property type="entry name" value="Ribulose bisphosphate carboxylase large chain"/>
    <property type="match status" value="1"/>
</dbReference>
<dbReference type="FunFam" id="3.30.70.150:FF:000001">
    <property type="entry name" value="Ribulose bisphosphate carboxylase large chain"/>
    <property type="match status" value="1"/>
</dbReference>
<dbReference type="Gene3D" id="3.20.20.110">
    <property type="entry name" value="Ribulose bisphosphate carboxylase, large subunit, C-terminal domain"/>
    <property type="match status" value="1"/>
</dbReference>
<dbReference type="Gene3D" id="3.30.70.150">
    <property type="entry name" value="RuBisCO large subunit, N-terminal domain"/>
    <property type="match status" value="1"/>
</dbReference>
<dbReference type="HAMAP" id="MF_01338">
    <property type="entry name" value="RuBisCO_L_type1"/>
    <property type="match status" value="1"/>
</dbReference>
<dbReference type="InterPro" id="IPR033966">
    <property type="entry name" value="RuBisCO"/>
</dbReference>
<dbReference type="InterPro" id="IPR020878">
    <property type="entry name" value="RuBisCo_large_chain_AS"/>
</dbReference>
<dbReference type="InterPro" id="IPR000685">
    <property type="entry name" value="RuBisCO_lsu_C"/>
</dbReference>
<dbReference type="InterPro" id="IPR036376">
    <property type="entry name" value="RuBisCO_lsu_C_sf"/>
</dbReference>
<dbReference type="InterPro" id="IPR017443">
    <property type="entry name" value="RuBisCO_lsu_fd_N"/>
</dbReference>
<dbReference type="InterPro" id="IPR036422">
    <property type="entry name" value="RuBisCO_lsu_N_sf"/>
</dbReference>
<dbReference type="InterPro" id="IPR020888">
    <property type="entry name" value="RuBisCO_lsuI"/>
</dbReference>
<dbReference type="NCBIfam" id="NF003252">
    <property type="entry name" value="PRK04208.1"/>
    <property type="match status" value="1"/>
</dbReference>
<dbReference type="PANTHER" id="PTHR42704">
    <property type="entry name" value="RIBULOSE BISPHOSPHATE CARBOXYLASE"/>
    <property type="match status" value="1"/>
</dbReference>
<dbReference type="PANTHER" id="PTHR42704:SF15">
    <property type="entry name" value="RIBULOSE BISPHOSPHATE CARBOXYLASE LARGE CHAIN"/>
    <property type="match status" value="1"/>
</dbReference>
<dbReference type="Pfam" id="PF00016">
    <property type="entry name" value="RuBisCO_large"/>
    <property type="match status" value="1"/>
</dbReference>
<dbReference type="Pfam" id="PF02788">
    <property type="entry name" value="RuBisCO_large_N"/>
    <property type="match status" value="1"/>
</dbReference>
<dbReference type="SFLD" id="SFLDG01052">
    <property type="entry name" value="RuBisCO"/>
    <property type="match status" value="1"/>
</dbReference>
<dbReference type="SFLD" id="SFLDS00014">
    <property type="entry name" value="RuBisCO"/>
    <property type="match status" value="1"/>
</dbReference>
<dbReference type="SFLD" id="SFLDG00301">
    <property type="entry name" value="RuBisCO-like_proteins"/>
    <property type="match status" value="1"/>
</dbReference>
<dbReference type="SUPFAM" id="SSF51649">
    <property type="entry name" value="RuBisCo, C-terminal domain"/>
    <property type="match status" value="1"/>
</dbReference>
<dbReference type="SUPFAM" id="SSF54966">
    <property type="entry name" value="RuBisCO, large subunit, small (N-terminal) domain"/>
    <property type="match status" value="1"/>
</dbReference>
<dbReference type="PROSITE" id="PS00157">
    <property type="entry name" value="RUBISCO_LARGE"/>
    <property type="match status" value="1"/>
</dbReference>
<name>RBL_BIXOR</name>
<protein>
    <recommendedName>
        <fullName evidence="1">Ribulose bisphosphate carboxylase large chain</fullName>
        <shortName evidence="1">RuBisCO large subunit</shortName>
        <ecNumber evidence="1">4.1.1.39</ecNumber>
    </recommendedName>
</protein>